<reference key="1">
    <citation type="journal article" date="2004" name="Environ. Microbiol.">
        <title>The genome of Desulfotalea psychrophila, a sulfate-reducing bacterium from permanently cold Arctic sediments.</title>
        <authorList>
            <person name="Rabus R."/>
            <person name="Ruepp A."/>
            <person name="Frickey T."/>
            <person name="Rattei T."/>
            <person name="Fartmann B."/>
            <person name="Stark M."/>
            <person name="Bauer M."/>
            <person name="Zibat A."/>
            <person name="Lombardot T."/>
            <person name="Becker I."/>
            <person name="Amann J."/>
            <person name="Gellner K."/>
            <person name="Teeling H."/>
            <person name="Leuschner W.D."/>
            <person name="Gloeckner F.-O."/>
            <person name="Lupas A.N."/>
            <person name="Amann R."/>
            <person name="Klenk H.-P."/>
        </authorList>
    </citation>
    <scope>NUCLEOTIDE SEQUENCE [LARGE SCALE GENOMIC DNA]</scope>
    <source>
        <strain>DSM 12343 / LSv54</strain>
    </source>
</reference>
<feature type="chain" id="PRO_0000113369" description="Malate dehydrogenase">
    <location>
        <begin position="1"/>
        <end position="325"/>
    </location>
</feature>
<feature type="active site" description="Proton acceptor" evidence="1">
    <location>
        <position position="187"/>
    </location>
</feature>
<feature type="binding site" evidence="1">
    <location>
        <begin position="11"/>
        <end position="17"/>
    </location>
    <ligand>
        <name>NAD(+)</name>
        <dbReference type="ChEBI" id="CHEBI:57540"/>
    </ligand>
</feature>
<feature type="binding site" evidence="1">
    <location>
        <position position="92"/>
    </location>
    <ligand>
        <name>substrate</name>
    </ligand>
</feature>
<feature type="binding site" evidence="1">
    <location>
        <position position="98"/>
    </location>
    <ligand>
        <name>substrate</name>
    </ligand>
</feature>
<feature type="binding site" evidence="1">
    <location>
        <position position="105"/>
    </location>
    <ligand>
        <name>NAD(+)</name>
        <dbReference type="ChEBI" id="CHEBI:57540"/>
    </ligand>
</feature>
<feature type="binding site" evidence="1">
    <location>
        <position position="112"/>
    </location>
    <ligand>
        <name>NAD(+)</name>
        <dbReference type="ChEBI" id="CHEBI:57540"/>
    </ligand>
</feature>
<feature type="binding site" evidence="1">
    <location>
        <begin position="129"/>
        <end position="131"/>
    </location>
    <ligand>
        <name>NAD(+)</name>
        <dbReference type="ChEBI" id="CHEBI:57540"/>
    </ligand>
</feature>
<feature type="binding site" evidence="1">
    <location>
        <position position="131"/>
    </location>
    <ligand>
        <name>substrate</name>
    </ligand>
</feature>
<feature type="binding site" evidence="1">
    <location>
        <position position="162"/>
    </location>
    <ligand>
        <name>substrate</name>
    </ligand>
</feature>
<evidence type="ECO:0000255" key="1">
    <source>
        <dbReference type="HAMAP-Rule" id="MF_01517"/>
    </source>
</evidence>
<comment type="function">
    <text evidence="1">Catalyzes the reversible oxidation of malate to oxaloacetate.</text>
</comment>
<comment type="catalytic activity">
    <reaction evidence="1">
        <text>(S)-malate + NAD(+) = oxaloacetate + NADH + H(+)</text>
        <dbReference type="Rhea" id="RHEA:21432"/>
        <dbReference type="ChEBI" id="CHEBI:15378"/>
        <dbReference type="ChEBI" id="CHEBI:15589"/>
        <dbReference type="ChEBI" id="CHEBI:16452"/>
        <dbReference type="ChEBI" id="CHEBI:57540"/>
        <dbReference type="ChEBI" id="CHEBI:57945"/>
        <dbReference type="EC" id="1.1.1.37"/>
    </reaction>
</comment>
<comment type="similarity">
    <text evidence="1">Belongs to the LDH/MDH superfamily. MDH type 2 family.</text>
</comment>
<keyword id="KW-0520">NAD</keyword>
<keyword id="KW-0560">Oxidoreductase</keyword>
<keyword id="KW-1185">Reference proteome</keyword>
<keyword id="KW-0816">Tricarboxylic acid cycle</keyword>
<gene>
    <name evidence="1" type="primary">mdh</name>
    <name type="ordered locus">DP0661</name>
</gene>
<protein>
    <recommendedName>
        <fullName evidence="1">Malate dehydrogenase</fullName>
        <ecNumber evidence="1">1.1.1.37</ecNumber>
    </recommendedName>
</protein>
<accession>Q6AQI3</accession>
<dbReference type="EC" id="1.1.1.37" evidence="1"/>
<dbReference type="EMBL" id="CR522870">
    <property type="protein sequence ID" value="CAG35390.1"/>
    <property type="molecule type" value="Genomic_DNA"/>
</dbReference>
<dbReference type="RefSeq" id="WP_011187906.1">
    <property type="nucleotide sequence ID" value="NC_006138.1"/>
</dbReference>
<dbReference type="SMR" id="Q6AQI3"/>
<dbReference type="STRING" id="177439.DP0661"/>
<dbReference type="KEGG" id="dps:DP0661"/>
<dbReference type="eggNOG" id="COG0039">
    <property type="taxonomic scope" value="Bacteria"/>
</dbReference>
<dbReference type="HOGENOM" id="CLU_040727_2_0_7"/>
<dbReference type="OrthoDB" id="9802969at2"/>
<dbReference type="Proteomes" id="UP000000602">
    <property type="component" value="Chromosome"/>
</dbReference>
<dbReference type="GO" id="GO:0030060">
    <property type="term" value="F:L-malate dehydrogenase (NAD+) activity"/>
    <property type="evidence" value="ECO:0007669"/>
    <property type="project" value="UniProtKB-UniRule"/>
</dbReference>
<dbReference type="GO" id="GO:0006108">
    <property type="term" value="P:malate metabolic process"/>
    <property type="evidence" value="ECO:0007669"/>
    <property type="project" value="InterPro"/>
</dbReference>
<dbReference type="GO" id="GO:0006099">
    <property type="term" value="P:tricarboxylic acid cycle"/>
    <property type="evidence" value="ECO:0007669"/>
    <property type="project" value="UniProtKB-UniRule"/>
</dbReference>
<dbReference type="CDD" id="cd01338">
    <property type="entry name" value="MDH_chloroplast-like"/>
    <property type="match status" value="1"/>
</dbReference>
<dbReference type="FunFam" id="3.40.50.720:FF:000010">
    <property type="entry name" value="Malate dehydrogenase"/>
    <property type="match status" value="1"/>
</dbReference>
<dbReference type="FunFam" id="3.90.110.10:FF:000002">
    <property type="entry name" value="Malate dehydrogenase"/>
    <property type="match status" value="1"/>
</dbReference>
<dbReference type="Gene3D" id="3.90.110.10">
    <property type="entry name" value="Lactate dehydrogenase/glycoside hydrolase, family 4, C-terminal"/>
    <property type="match status" value="1"/>
</dbReference>
<dbReference type="Gene3D" id="3.40.50.720">
    <property type="entry name" value="NAD(P)-binding Rossmann-like Domain"/>
    <property type="match status" value="1"/>
</dbReference>
<dbReference type="HAMAP" id="MF_01517">
    <property type="entry name" value="Malate_dehydrog_2"/>
    <property type="match status" value="1"/>
</dbReference>
<dbReference type="InterPro" id="IPR001557">
    <property type="entry name" value="L-lactate/malate_DH"/>
</dbReference>
<dbReference type="InterPro" id="IPR022383">
    <property type="entry name" value="Lactate/malate_DH_C"/>
</dbReference>
<dbReference type="InterPro" id="IPR001236">
    <property type="entry name" value="Lactate/malate_DH_N"/>
</dbReference>
<dbReference type="InterPro" id="IPR015955">
    <property type="entry name" value="Lactate_DH/Glyco_Ohase_4_C"/>
</dbReference>
<dbReference type="InterPro" id="IPR010945">
    <property type="entry name" value="Malate_DH_type2"/>
</dbReference>
<dbReference type="InterPro" id="IPR036291">
    <property type="entry name" value="NAD(P)-bd_dom_sf"/>
</dbReference>
<dbReference type="NCBIfam" id="TIGR01759">
    <property type="entry name" value="MalateDH-SF1"/>
    <property type="match status" value="1"/>
</dbReference>
<dbReference type="NCBIfam" id="NF003916">
    <property type="entry name" value="PRK05442.1"/>
    <property type="match status" value="1"/>
</dbReference>
<dbReference type="PANTHER" id="PTHR23382">
    <property type="entry name" value="MALATE DEHYDROGENASE"/>
    <property type="match status" value="1"/>
</dbReference>
<dbReference type="Pfam" id="PF02866">
    <property type="entry name" value="Ldh_1_C"/>
    <property type="match status" value="1"/>
</dbReference>
<dbReference type="Pfam" id="PF00056">
    <property type="entry name" value="Ldh_1_N"/>
    <property type="match status" value="1"/>
</dbReference>
<dbReference type="PIRSF" id="PIRSF000102">
    <property type="entry name" value="Lac_mal_DH"/>
    <property type="match status" value="1"/>
</dbReference>
<dbReference type="SUPFAM" id="SSF56327">
    <property type="entry name" value="LDH C-terminal domain-like"/>
    <property type="match status" value="1"/>
</dbReference>
<dbReference type="SUPFAM" id="SSF51735">
    <property type="entry name" value="NAD(P)-binding Rossmann-fold domains"/>
    <property type="match status" value="1"/>
</dbReference>
<name>MDH_DESPS</name>
<organism>
    <name type="scientific">Desulfotalea psychrophila (strain LSv54 / DSM 12343)</name>
    <dbReference type="NCBI Taxonomy" id="177439"/>
    <lineage>
        <taxon>Bacteria</taxon>
        <taxon>Pseudomonadati</taxon>
        <taxon>Thermodesulfobacteriota</taxon>
        <taxon>Desulfobulbia</taxon>
        <taxon>Desulfobulbales</taxon>
        <taxon>Desulfocapsaceae</taxon>
        <taxon>Desulfotalea</taxon>
    </lineage>
</organism>
<sequence length="325" mass="34978">MKPPVRVAITGAAGHVSYSLIFRIAAGHMLGKDQPVILQLLEIPQAMDVLKGVVLELEDCAFPLLHGLVCSDDVHVAFKDADYAILVGARPRGPGMERSDLIQANGPIFTTQGEALSAEANPEVKVLVVGNPANTNALILLKNAPYINPRNITAMMRLDHNRALFQVAKKMGCHCSDVEKMVVWGNHSASQFPDISYAEIAGEKVAKGVENNWHGDNLIPIIQQRGAAVIKARGASSAASAASAAIDHMRNWVLGSGGKWVSMGVYSRGNSYGLDEDIMFSLPVICEDGDWREVAGLELSSFQRAMLEATEAELQAEREAVADII</sequence>
<proteinExistence type="inferred from homology"/>